<protein>
    <recommendedName>
        <fullName evidence="1">Aspartyl/glutamyl-tRNA(Asn/Gln) amidotransferase subunit B</fullName>
        <shortName evidence="1">Asp/Glu-ADT subunit B</shortName>
        <ecNumber evidence="1">6.3.5.-</ecNumber>
    </recommendedName>
</protein>
<proteinExistence type="inferred from homology"/>
<comment type="function">
    <text evidence="1">Allows the formation of correctly charged Asn-tRNA(Asn) or Gln-tRNA(Gln) through the transamidation of misacylated Asp-tRNA(Asn) or Glu-tRNA(Gln) in organisms which lack either or both of asparaginyl-tRNA or glutaminyl-tRNA synthetases. The reaction takes place in the presence of glutamine and ATP through an activated phospho-Asp-tRNA(Asn) or phospho-Glu-tRNA(Gln).</text>
</comment>
<comment type="catalytic activity">
    <reaction evidence="1">
        <text>L-glutamyl-tRNA(Gln) + L-glutamine + ATP + H2O = L-glutaminyl-tRNA(Gln) + L-glutamate + ADP + phosphate + H(+)</text>
        <dbReference type="Rhea" id="RHEA:17521"/>
        <dbReference type="Rhea" id="RHEA-COMP:9681"/>
        <dbReference type="Rhea" id="RHEA-COMP:9684"/>
        <dbReference type="ChEBI" id="CHEBI:15377"/>
        <dbReference type="ChEBI" id="CHEBI:15378"/>
        <dbReference type="ChEBI" id="CHEBI:29985"/>
        <dbReference type="ChEBI" id="CHEBI:30616"/>
        <dbReference type="ChEBI" id="CHEBI:43474"/>
        <dbReference type="ChEBI" id="CHEBI:58359"/>
        <dbReference type="ChEBI" id="CHEBI:78520"/>
        <dbReference type="ChEBI" id="CHEBI:78521"/>
        <dbReference type="ChEBI" id="CHEBI:456216"/>
    </reaction>
</comment>
<comment type="catalytic activity">
    <reaction evidence="1">
        <text>L-aspartyl-tRNA(Asn) + L-glutamine + ATP + H2O = L-asparaginyl-tRNA(Asn) + L-glutamate + ADP + phosphate + 2 H(+)</text>
        <dbReference type="Rhea" id="RHEA:14513"/>
        <dbReference type="Rhea" id="RHEA-COMP:9674"/>
        <dbReference type="Rhea" id="RHEA-COMP:9677"/>
        <dbReference type="ChEBI" id="CHEBI:15377"/>
        <dbReference type="ChEBI" id="CHEBI:15378"/>
        <dbReference type="ChEBI" id="CHEBI:29985"/>
        <dbReference type="ChEBI" id="CHEBI:30616"/>
        <dbReference type="ChEBI" id="CHEBI:43474"/>
        <dbReference type="ChEBI" id="CHEBI:58359"/>
        <dbReference type="ChEBI" id="CHEBI:78515"/>
        <dbReference type="ChEBI" id="CHEBI:78516"/>
        <dbReference type="ChEBI" id="CHEBI:456216"/>
    </reaction>
</comment>
<comment type="subunit">
    <text evidence="1">Heterotrimer of A, B and C subunits.</text>
</comment>
<comment type="similarity">
    <text evidence="1">Belongs to the GatB/GatE family. GatB subfamily.</text>
</comment>
<dbReference type="EC" id="6.3.5.-" evidence="1"/>
<dbReference type="EMBL" id="CP001095">
    <property type="protein sequence ID" value="ACJ51388.1"/>
    <property type="molecule type" value="Genomic_DNA"/>
</dbReference>
<dbReference type="EMBL" id="AP010889">
    <property type="protein sequence ID" value="BAJ67858.1"/>
    <property type="molecule type" value="Genomic_DNA"/>
</dbReference>
<dbReference type="RefSeq" id="WP_007051530.1">
    <property type="nucleotide sequence ID" value="NZ_JDTT01000027.1"/>
</dbReference>
<dbReference type="SMR" id="B7GTU7"/>
<dbReference type="GeneID" id="69577474"/>
<dbReference type="KEGG" id="bln:Blon_0260"/>
<dbReference type="KEGG" id="blon:BLIJ_0264"/>
<dbReference type="PATRIC" id="fig|391904.8.peg.263"/>
<dbReference type="HOGENOM" id="CLU_019240_0_0_11"/>
<dbReference type="Proteomes" id="UP000001360">
    <property type="component" value="Chromosome"/>
</dbReference>
<dbReference type="GO" id="GO:0050566">
    <property type="term" value="F:asparaginyl-tRNA synthase (glutamine-hydrolyzing) activity"/>
    <property type="evidence" value="ECO:0007669"/>
    <property type="project" value="RHEA"/>
</dbReference>
<dbReference type="GO" id="GO:0005524">
    <property type="term" value="F:ATP binding"/>
    <property type="evidence" value="ECO:0007669"/>
    <property type="project" value="UniProtKB-KW"/>
</dbReference>
<dbReference type="GO" id="GO:0050567">
    <property type="term" value="F:glutaminyl-tRNA synthase (glutamine-hydrolyzing) activity"/>
    <property type="evidence" value="ECO:0007669"/>
    <property type="project" value="UniProtKB-UniRule"/>
</dbReference>
<dbReference type="GO" id="GO:0070681">
    <property type="term" value="P:glutaminyl-tRNAGln biosynthesis via transamidation"/>
    <property type="evidence" value="ECO:0007669"/>
    <property type="project" value="TreeGrafter"/>
</dbReference>
<dbReference type="GO" id="GO:0006412">
    <property type="term" value="P:translation"/>
    <property type="evidence" value="ECO:0007669"/>
    <property type="project" value="UniProtKB-UniRule"/>
</dbReference>
<dbReference type="Gene3D" id="1.10.10.410">
    <property type="match status" value="1"/>
</dbReference>
<dbReference type="Gene3D" id="1.10.150.380">
    <property type="entry name" value="GatB domain, N-terminal subdomain"/>
    <property type="match status" value="1"/>
</dbReference>
<dbReference type="HAMAP" id="MF_00121">
    <property type="entry name" value="GatB"/>
    <property type="match status" value="1"/>
</dbReference>
<dbReference type="InterPro" id="IPR017959">
    <property type="entry name" value="Asn/Gln-tRNA_amidoTrfase_suB/E"/>
</dbReference>
<dbReference type="InterPro" id="IPR006075">
    <property type="entry name" value="Asn/Gln-tRNA_Trfase_suB/E_cat"/>
</dbReference>
<dbReference type="InterPro" id="IPR018027">
    <property type="entry name" value="Asn/Gln_amidotransferase"/>
</dbReference>
<dbReference type="InterPro" id="IPR003789">
    <property type="entry name" value="Asn/Gln_tRNA_amidoTrase-B-like"/>
</dbReference>
<dbReference type="InterPro" id="IPR004413">
    <property type="entry name" value="GatB"/>
</dbReference>
<dbReference type="InterPro" id="IPR042114">
    <property type="entry name" value="GatB_C_1"/>
</dbReference>
<dbReference type="InterPro" id="IPR023168">
    <property type="entry name" value="GatB_Yqey_C_2"/>
</dbReference>
<dbReference type="InterPro" id="IPR017958">
    <property type="entry name" value="Gln-tRNA_amidoTrfase_suB_CS"/>
</dbReference>
<dbReference type="InterPro" id="IPR014746">
    <property type="entry name" value="Gln_synth/guanido_kin_cat_dom"/>
</dbReference>
<dbReference type="NCBIfam" id="TIGR00133">
    <property type="entry name" value="gatB"/>
    <property type="match status" value="1"/>
</dbReference>
<dbReference type="NCBIfam" id="NF004012">
    <property type="entry name" value="PRK05477.1-2"/>
    <property type="match status" value="1"/>
</dbReference>
<dbReference type="NCBIfam" id="NF004013">
    <property type="entry name" value="PRK05477.1-3"/>
    <property type="match status" value="1"/>
</dbReference>
<dbReference type="NCBIfam" id="NF004014">
    <property type="entry name" value="PRK05477.1-4"/>
    <property type="match status" value="1"/>
</dbReference>
<dbReference type="PANTHER" id="PTHR11659">
    <property type="entry name" value="GLUTAMYL-TRNA GLN AMIDOTRANSFERASE SUBUNIT B MITOCHONDRIAL AND PROKARYOTIC PET112-RELATED"/>
    <property type="match status" value="1"/>
</dbReference>
<dbReference type="PANTHER" id="PTHR11659:SF0">
    <property type="entry name" value="GLUTAMYL-TRNA(GLN) AMIDOTRANSFERASE SUBUNIT B, MITOCHONDRIAL"/>
    <property type="match status" value="1"/>
</dbReference>
<dbReference type="Pfam" id="PF02934">
    <property type="entry name" value="GatB_N"/>
    <property type="match status" value="1"/>
</dbReference>
<dbReference type="Pfam" id="PF02637">
    <property type="entry name" value="GatB_Yqey"/>
    <property type="match status" value="1"/>
</dbReference>
<dbReference type="SMART" id="SM00845">
    <property type="entry name" value="GatB_Yqey"/>
    <property type="match status" value="1"/>
</dbReference>
<dbReference type="SUPFAM" id="SSF89095">
    <property type="entry name" value="GatB/YqeY motif"/>
    <property type="match status" value="1"/>
</dbReference>
<dbReference type="SUPFAM" id="SSF55931">
    <property type="entry name" value="Glutamine synthetase/guanido kinase"/>
    <property type="match status" value="1"/>
</dbReference>
<dbReference type="PROSITE" id="PS01234">
    <property type="entry name" value="GATB"/>
    <property type="match status" value="1"/>
</dbReference>
<evidence type="ECO:0000255" key="1">
    <source>
        <dbReference type="HAMAP-Rule" id="MF_00121"/>
    </source>
</evidence>
<reference key="1">
    <citation type="journal article" date="2008" name="Proc. Natl. Acad. Sci. U.S.A.">
        <title>The genome sequence of Bifidobacterium longum subsp. infantis reveals adaptations for milk utilization within the infant microbiome.</title>
        <authorList>
            <person name="Sela D.A."/>
            <person name="Chapman J."/>
            <person name="Adeuya A."/>
            <person name="Kim J.H."/>
            <person name="Chen F."/>
            <person name="Whitehead T.R."/>
            <person name="Lapidus A."/>
            <person name="Rokhsar D.S."/>
            <person name="Lebrilla C.B."/>
            <person name="German J.B."/>
            <person name="Price N.P."/>
            <person name="Richardson P.M."/>
            <person name="Mills D.A."/>
        </authorList>
    </citation>
    <scope>NUCLEOTIDE SEQUENCE [LARGE SCALE GENOMIC DNA]</scope>
    <source>
        <strain>ATCC 15697 / DSM 20088 / JCM 1222 / NCTC 11817 / S12</strain>
    </source>
</reference>
<reference key="2">
    <citation type="journal article" date="2011" name="Nature">
        <title>Bifidobacteria can protect from enteropathogenic infection through production of acetate.</title>
        <authorList>
            <person name="Fukuda S."/>
            <person name="Toh H."/>
            <person name="Hase K."/>
            <person name="Oshima K."/>
            <person name="Nakanishi Y."/>
            <person name="Yoshimura K."/>
            <person name="Tobe T."/>
            <person name="Clarke J.M."/>
            <person name="Topping D.L."/>
            <person name="Suzuki T."/>
            <person name="Taylor T.D."/>
            <person name="Itoh K."/>
            <person name="Kikuchi J."/>
            <person name="Morita H."/>
            <person name="Hattori M."/>
            <person name="Ohno H."/>
        </authorList>
    </citation>
    <scope>NUCLEOTIDE SEQUENCE [LARGE SCALE GENOMIC DNA]</scope>
    <source>
        <strain>ATCC 15697 / DSM 20088 / JCM 1222 / NCTC 11817 / S12</strain>
    </source>
</reference>
<accession>B7GTU7</accession>
<accession>E8MP34</accession>
<gene>
    <name evidence="1" type="primary">gatB</name>
    <name type="ordered locus">Blon_0260</name>
    <name type="ordered locus">BLIJ_0264</name>
</gene>
<feature type="chain" id="PRO_1000122510" description="Aspartyl/glutamyl-tRNA(Asn/Gln) amidotransferase subunit B">
    <location>
        <begin position="1"/>
        <end position="499"/>
    </location>
</feature>
<keyword id="KW-0067">ATP-binding</keyword>
<keyword id="KW-0436">Ligase</keyword>
<keyword id="KW-0547">Nucleotide-binding</keyword>
<keyword id="KW-0648">Protein biosynthesis</keyword>
<sequence>MAEKLMKYADATKKYDVVFGLETHVELSTNTKLFCPAHIEFGGEPNTELTPVSLGLPGSLPVINKTAVDYAIKLGLALHCEIAEWSQFARKNYFYPDMPRDYQISQYDKPTNGNGYLDVELEDGTVFRVPIERAHIEDDAGKNTHVGGADGRIEGADHSLVDYNRAGVPLIEIVTKPIEGAGDRAPEIAGAYVRAIRDIVRALNISHARMEQGNMRADVNVSLRPSPDAPYGTRSETKNVNSFRGIEKTIQYEIRRQAARLDDGKEILQETRHWDEATQTTAGGRLKSDADDYRYFPDPDLVMLHITKEHIEEMKAQMPEMPRERRNRLKSEWGLSDLQMRDILNADALDLIEETVKAGAKAAGARKWWLGELSREANAKGVSLEELPITPADVAEVEKLIASGKLNDKLAKQTVEGVLKGEGTPDEVVKKHDYKIVEDNGAIEAAVDAAFEANPDVVEKLKSGNMKPMGVIIGAVMKATRGQADAKAVTKVVMGKIKG</sequence>
<name>GATB_BIFLS</name>
<organism>
    <name type="scientific">Bifidobacterium longum subsp. infantis (strain ATCC 15697 / DSM 20088 / JCM 1222 / NCTC 11817 / S12)</name>
    <dbReference type="NCBI Taxonomy" id="391904"/>
    <lineage>
        <taxon>Bacteria</taxon>
        <taxon>Bacillati</taxon>
        <taxon>Actinomycetota</taxon>
        <taxon>Actinomycetes</taxon>
        <taxon>Bifidobacteriales</taxon>
        <taxon>Bifidobacteriaceae</taxon>
        <taxon>Bifidobacterium</taxon>
    </lineage>
</organism>